<reference key="1">
    <citation type="journal article" date="1997" name="J. Bacteriol.">
        <title>Translation initiation factor IF2 of the myxobacterium Stigmatella aurantiaca: presence of a single species with an unusual N-terminal sequence.</title>
        <authorList>
            <person name="Bremaud L."/>
            <person name="Laalami S."/>
            <person name="Derijard B."/>
            <person name="Cenatiempo Y."/>
        </authorList>
    </citation>
    <scope>NUCLEOTIDE SEQUENCE [GENOMIC DNA]</scope>
    <source>
        <strain>DW4</strain>
    </source>
</reference>
<accession>P55875</accession>
<dbReference type="EMBL" id="X87940">
    <property type="protein sequence ID" value="CAA61162.1"/>
    <property type="molecule type" value="Genomic_DNA"/>
</dbReference>
<dbReference type="PIR" id="T43226">
    <property type="entry name" value="T43226"/>
</dbReference>
<dbReference type="SMR" id="P55875"/>
<dbReference type="GO" id="GO:0005829">
    <property type="term" value="C:cytosol"/>
    <property type="evidence" value="ECO:0007669"/>
    <property type="project" value="TreeGrafter"/>
</dbReference>
<dbReference type="GO" id="GO:0005525">
    <property type="term" value="F:GTP binding"/>
    <property type="evidence" value="ECO:0007669"/>
    <property type="project" value="UniProtKB-KW"/>
</dbReference>
<dbReference type="GO" id="GO:0003924">
    <property type="term" value="F:GTPase activity"/>
    <property type="evidence" value="ECO:0007669"/>
    <property type="project" value="UniProtKB-UniRule"/>
</dbReference>
<dbReference type="GO" id="GO:0003743">
    <property type="term" value="F:translation initiation factor activity"/>
    <property type="evidence" value="ECO:0007669"/>
    <property type="project" value="UniProtKB-UniRule"/>
</dbReference>
<dbReference type="CDD" id="cd01887">
    <property type="entry name" value="IF2_eIF5B"/>
    <property type="match status" value="1"/>
</dbReference>
<dbReference type="CDD" id="cd03702">
    <property type="entry name" value="IF2_mtIF2_II"/>
    <property type="match status" value="1"/>
</dbReference>
<dbReference type="CDD" id="cd03692">
    <property type="entry name" value="mtIF2_IVc"/>
    <property type="match status" value="1"/>
</dbReference>
<dbReference type="FunFam" id="2.40.30.10:FF:000007">
    <property type="entry name" value="Translation initiation factor IF-2"/>
    <property type="match status" value="1"/>
</dbReference>
<dbReference type="FunFam" id="2.40.30.10:FF:000008">
    <property type="entry name" value="Translation initiation factor IF-2"/>
    <property type="match status" value="1"/>
</dbReference>
<dbReference type="FunFam" id="3.40.50.10050:FF:000001">
    <property type="entry name" value="Translation initiation factor IF-2"/>
    <property type="match status" value="1"/>
</dbReference>
<dbReference type="FunFam" id="3.40.50.300:FF:000019">
    <property type="entry name" value="Translation initiation factor IF-2"/>
    <property type="match status" value="1"/>
</dbReference>
<dbReference type="Gene3D" id="1.10.10.2480">
    <property type="match status" value="1"/>
</dbReference>
<dbReference type="Gene3D" id="3.40.50.300">
    <property type="entry name" value="P-loop containing nucleotide triphosphate hydrolases"/>
    <property type="match status" value="1"/>
</dbReference>
<dbReference type="Gene3D" id="2.40.30.10">
    <property type="entry name" value="Translation factors"/>
    <property type="match status" value="2"/>
</dbReference>
<dbReference type="Gene3D" id="3.40.50.10050">
    <property type="entry name" value="Translation initiation factor IF- 2, domain 3"/>
    <property type="match status" value="1"/>
</dbReference>
<dbReference type="HAMAP" id="MF_00100_B">
    <property type="entry name" value="IF_2_B"/>
    <property type="match status" value="1"/>
</dbReference>
<dbReference type="InterPro" id="IPR053905">
    <property type="entry name" value="EF-G-like_DII"/>
</dbReference>
<dbReference type="InterPro" id="IPR004161">
    <property type="entry name" value="EFTu-like_2"/>
</dbReference>
<dbReference type="InterPro" id="IPR044145">
    <property type="entry name" value="IF2_II"/>
</dbReference>
<dbReference type="InterPro" id="IPR006847">
    <property type="entry name" value="IF2_N"/>
</dbReference>
<dbReference type="InterPro" id="IPR027417">
    <property type="entry name" value="P-loop_NTPase"/>
</dbReference>
<dbReference type="InterPro" id="IPR005225">
    <property type="entry name" value="Small_GTP-bd"/>
</dbReference>
<dbReference type="InterPro" id="IPR000795">
    <property type="entry name" value="T_Tr_GTP-bd_dom"/>
</dbReference>
<dbReference type="InterPro" id="IPR000178">
    <property type="entry name" value="TF_IF2_bacterial-like"/>
</dbReference>
<dbReference type="InterPro" id="IPR015760">
    <property type="entry name" value="TIF_IF2"/>
</dbReference>
<dbReference type="InterPro" id="IPR023115">
    <property type="entry name" value="TIF_IF2_dom3"/>
</dbReference>
<dbReference type="InterPro" id="IPR036925">
    <property type="entry name" value="TIF_IF2_dom3_sf"/>
</dbReference>
<dbReference type="InterPro" id="IPR009000">
    <property type="entry name" value="Transl_B-barrel_sf"/>
</dbReference>
<dbReference type="NCBIfam" id="TIGR00487">
    <property type="entry name" value="IF-2"/>
    <property type="match status" value="1"/>
</dbReference>
<dbReference type="NCBIfam" id="TIGR00231">
    <property type="entry name" value="small_GTP"/>
    <property type="match status" value="1"/>
</dbReference>
<dbReference type="PANTHER" id="PTHR43381:SF5">
    <property type="entry name" value="TR-TYPE G DOMAIN-CONTAINING PROTEIN"/>
    <property type="match status" value="1"/>
</dbReference>
<dbReference type="PANTHER" id="PTHR43381">
    <property type="entry name" value="TRANSLATION INITIATION FACTOR IF-2-RELATED"/>
    <property type="match status" value="1"/>
</dbReference>
<dbReference type="Pfam" id="PF22042">
    <property type="entry name" value="EF-G_D2"/>
    <property type="match status" value="1"/>
</dbReference>
<dbReference type="Pfam" id="PF00009">
    <property type="entry name" value="GTP_EFTU"/>
    <property type="match status" value="1"/>
</dbReference>
<dbReference type="Pfam" id="PF03144">
    <property type="entry name" value="GTP_EFTU_D2"/>
    <property type="match status" value="1"/>
</dbReference>
<dbReference type="Pfam" id="PF11987">
    <property type="entry name" value="IF-2"/>
    <property type="match status" value="1"/>
</dbReference>
<dbReference type="Pfam" id="PF04760">
    <property type="entry name" value="IF2_N"/>
    <property type="match status" value="2"/>
</dbReference>
<dbReference type="SUPFAM" id="SSF52156">
    <property type="entry name" value="Initiation factor IF2/eIF5b, domain 3"/>
    <property type="match status" value="1"/>
</dbReference>
<dbReference type="SUPFAM" id="SSF52540">
    <property type="entry name" value="P-loop containing nucleoside triphosphate hydrolases"/>
    <property type="match status" value="1"/>
</dbReference>
<dbReference type="SUPFAM" id="SSF50447">
    <property type="entry name" value="Translation proteins"/>
    <property type="match status" value="2"/>
</dbReference>
<dbReference type="PROSITE" id="PS51722">
    <property type="entry name" value="G_TR_2"/>
    <property type="match status" value="1"/>
</dbReference>
<dbReference type="PROSITE" id="PS01176">
    <property type="entry name" value="IF2"/>
    <property type="match status" value="1"/>
</dbReference>
<comment type="function">
    <text evidence="1">One of the essential components for the initiation of protein synthesis. Protects formylmethionyl-tRNA from spontaneous hydrolysis and promotes its binding to the 30S ribosomal subunits. Also involved in the hydrolysis of GTP during the formation of the 70S ribosomal complex (By similarity).</text>
</comment>
<comment type="subcellular location">
    <subcellularLocation>
        <location evidence="1">Cytoplasm</location>
    </subcellularLocation>
</comment>
<comment type="similarity">
    <text evidence="3">Belongs to the TRAFAC class translation factor GTPase superfamily. Classic translation factor GTPase family. IF-2 subfamily.</text>
</comment>
<gene>
    <name type="primary">infB</name>
</gene>
<sequence>MSKKRVHEIAKELKGHGIELDNKEVVTELAGLGYDVKSHSSSLDDDQATAAVQKILDKRKPKQAAAPVTAKGFVVRRKVGPPTGSGVYDASQEPSQAASDVSSPPSEPVHEASGAEAAASERVPEAAAVQEPVAEAPRAAASEPAAEAPKATAPVAPEPTVEAPKAAAPVAPEPTVEAPKTEAPVAAAPIAEAPTPPARTEVPVTSGRRAASCRGAAPLPCSGKDPLALNSSPQSSAAFCPDARNPGDCDFPSTSGRWHAWPSRGSSGRFAHGAGRPSGWTFARWTSGRPRAASRRTAVQRPSGRAGAGASHGLQRRKGFGAGAQASGQPQNVTMVGGIPHAPTAPDARALRPTATQAVVISRPLIQVRRVTPTTSSAKQYPMAPGKKAIGEVREFKVVPDHAGRGRELVDVSKNKDKSPRKRGGPNDTSISKQELTDLAWGRVNIPLRGKKKKPTKKGAKTQITQMAEDKKVIKLQEGISVSDLGQRMGVRTSDIIKKLMGLGKMATANQMVDADTVELIASDYGWKVDRVGFEVEDYLPEVVARPEDARTRPPVVTVMGHVDHGKTSLLDAIRAANVASGEAGGITQHIGAYSVTTARGDITFLDTPGHEAFTSMRARGANVTDIVILVVAADDGVMPQTIEAIKHAKAAEVPIVVALNKMDVPGANPDRVKKDLANHELVPEEWGGETIMVPVSAKQKMGIDLLLENVVLQAEVLELTSNPSRPAVGAIIEGELDRGRGPVATVLVQEGTLRVGDAVVTGTDYGRVRAMNNSRGESVKEVLPGYCAEVIGLSGVPSAGDTINVVADEKAAKQIAEHRGMKERQSELSKVSRETLDQLFAKTKAGGGPKELRVVIKADVQGSAEAVKQAVQKLTTHKVKVEVIDTGVGAITESDVMRAAASKGVVLGFNVKPESGAESAAKAEGVMLRSFSIIYELIDGVRSSMEELLEPIRTERKLGRAEVRNTFNVPKLGTIAGAAVLDGVIKRGAFVRLMRENKQLFAGKMASLRRFKDDVKEVAQGFECGIGIENFNDLKAGDIIEAYEIEETRQSLT</sequence>
<protein>
    <recommendedName>
        <fullName>Translation initiation factor IF-2</fullName>
    </recommendedName>
</protein>
<name>IF2_STIAU</name>
<feature type="chain" id="PRO_0000137256" description="Translation initiation factor IF-2">
    <location>
        <begin position="1"/>
        <end position="1054"/>
    </location>
</feature>
<feature type="domain" description="tr-type G">
    <location>
        <begin position="552"/>
        <end position="721"/>
    </location>
</feature>
<feature type="region of interest" description="Disordered" evidence="2">
    <location>
        <begin position="57"/>
        <end position="213"/>
    </location>
</feature>
<feature type="region of interest" description="Disordered" evidence="2">
    <location>
        <begin position="225"/>
        <end position="248"/>
    </location>
</feature>
<feature type="region of interest" description="Disordered" evidence="2">
    <location>
        <begin position="287"/>
        <end position="315"/>
    </location>
</feature>
<feature type="region of interest" description="Disordered" evidence="2">
    <location>
        <begin position="401"/>
        <end position="436"/>
    </location>
</feature>
<feature type="region of interest" description="G1" evidence="1">
    <location>
        <begin position="561"/>
        <end position="568"/>
    </location>
</feature>
<feature type="region of interest" description="G2" evidence="1">
    <location>
        <begin position="586"/>
        <end position="590"/>
    </location>
</feature>
<feature type="region of interest" description="G3" evidence="1">
    <location>
        <begin position="607"/>
        <end position="610"/>
    </location>
</feature>
<feature type="region of interest" description="G4" evidence="1">
    <location>
        <begin position="661"/>
        <end position="664"/>
    </location>
</feature>
<feature type="region of interest" description="G5" evidence="1">
    <location>
        <begin position="697"/>
        <end position="699"/>
    </location>
</feature>
<feature type="compositionally biased region" description="Polar residues" evidence="2">
    <location>
        <begin position="92"/>
        <end position="104"/>
    </location>
</feature>
<feature type="compositionally biased region" description="Low complexity" evidence="2">
    <location>
        <begin position="111"/>
        <end position="213"/>
    </location>
</feature>
<feature type="compositionally biased region" description="Basic and acidic residues" evidence="2">
    <location>
        <begin position="401"/>
        <end position="418"/>
    </location>
</feature>
<feature type="binding site" evidence="1">
    <location>
        <begin position="561"/>
        <end position="568"/>
    </location>
    <ligand>
        <name>GTP</name>
        <dbReference type="ChEBI" id="CHEBI:37565"/>
    </ligand>
</feature>
<feature type="binding site" evidence="1">
    <location>
        <begin position="607"/>
        <end position="611"/>
    </location>
    <ligand>
        <name>GTP</name>
        <dbReference type="ChEBI" id="CHEBI:37565"/>
    </ligand>
</feature>
<feature type="binding site" evidence="1">
    <location>
        <begin position="661"/>
        <end position="664"/>
    </location>
    <ligand>
        <name>GTP</name>
        <dbReference type="ChEBI" id="CHEBI:37565"/>
    </ligand>
</feature>
<evidence type="ECO:0000250" key="1"/>
<evidence type="ECO:0000256" key="2">
    <source>
        <dbReference type="SAM" id="MobiDB-lite"/>
    </source>
</evidence>
<evidence type="ECO:0000305" key="3"/>
<proteinExistence type="inferred from homology"/>
<organism>
    <name type="scientific">Stigmatella aurantiaca</name>
    <dbReference type="NCBI Taxonomy" id="41"/>
    <lineage>
        <taxon>Bacteria</taxon>
        <taxon>Pseudomonadati</taxon>
        <taxon>Myxococcota</taxon>
        <taxon>Myxococcia</taxon>
        <taxon>Myxococcales</taxon>
        <taxon>Cystobacterineae</taxon>
        <taxon>Archangiaceae</taxon>
        <taxon>Stigmatella</taxon>
    </lineage>
</organism>
<keyword id="KW-0963">Cytoplasm</keyword>
<keyword id="KW-0342">GTP-binding</keyword>
<keyword id="KW-0396">Initiation factor</keyword>
<keyword id="KW-0547">Nucleotide-binding</keyword>
<keyword id="KW-0648">Protein biosynthesis</keyword>